<comment type="function">
    <text evidence="1">Regulatory subunit of the poly(A)-nuclease (PAN) deadenylation complex, one of two cytoplasmic mRNA deadenylases involved in mRNA turnover. PAN specifically shortens poly(A) tails of RNA and the activity is stimulated by poly(A)-binding protein pabp-1. PAN deadenylation is followed by rapid degradation of the shortened mRNA tails by the CCR4-NOT complex. Deadenylated mRNAs are then degraded by two alternative mechanisms, namely exosome-mediated 3'-5' exonucleolytic degradation, or deadenylation-dependent mRNA decaping and subsequent 5'-3' exonucleolytic degradation by rgb-30/xrn1. May also be involved in post-transcriptional maturation of mRNA poly(A) tails. par-2/pan3 acts as a positive regulator for PAN activity, recruiting the catalytic subunit par-1/pan2 to mRNA via its interaction with RNA and with pabp-1.</text>
</comment>
<comment type="subunit">
    <text evidence="1 3 4">Homodimer. Forms a heterotrimer with a catalytic subunit par-1/pan2 to form the poly(A)-nuclease (PAN) deadenylation complex. Interacts (via PAM-2 motif) with poly(A)-binding protein pabp-1 (via PABC domain), conferring substrate specificity of the enzyme complex.</text>
</comment>
<comment type="interaction">
    <interactant intactId="EBI-16108116">
        <id>Q7SDP4</id>
    </interactant>
    <interactant intactId="EBI-16108085">
        <id>P0C581</id>
        <label>par-1</label>
    </interactant>
    <organismsDiffer>false</organismsDiffer>
    <experiments>6</experiments>
</comment>
<comment type="subcellular location">
    <subcellularLocation>
        <location evidence="1">Cytoplasm</location>
    </subcellularLocation>
</comment>
<comment type="domain">
    <text evidence="1">The N-terminal zinc finger binds to poly(A) RNA.</text>
</comment>
<comment type="domain">
    <text evidence="1 6">Contains a pseudokinase domain. The protein kinase domain is predicted to be catalytically inactive because some of the residues important for catalytic activity are substituted and it lacks the equivalent of the binding site for a peptide substrate. However, it has retained an ATP-binding site and ATP-binding is required for mRNA degradation, stimulating the activity of the PAN2 nuclease in vitro (PubMed:23932717). The nucleotide-binding site is juxtaposed to the RNase active site of par-1/pan2 in the complex and may actually bind nucleosides of a poly(A) RNA rather than ATP, feeding the poly(A)-tail to the active site of the deadenylase and thus increasing the efficiency with which this distributive enzyme degrades oligo(A) RNAs (By similarity).</text>
</comment>
<comment type="domain">
    <text evidence="1">The pseudokinase domain, the coiled-coil (CC), and C-terminal knob domain (CK) form a structural unit (PKC) that forms an extensive high-affinity interaction surface for par-1/pan2.</text>
</comment>
<comment type="similarity">
    <text evidence="1">Belongs to the protein kinase superfamily. PAN3 family.</text>
</comment>
<sequence>MAATRYNSGDLRRQVGSPRAKNRDTKETLCRNVVIYGHCRWEDSGCTFNHDQNKASVSQTDLNSNRRVFNVESPSFTPANQQQSAGKKSTFSSQAASAAPFTPRGVGTSTPTLQQANDSTIFNPAAIREFTPQNYDVGNTISQNGAQHVTQDGGLYSDPFSISSLGQTMPPQGQYNPYANDPNNLAGAGAGLYQPAGFGNGLVHPPNYHLYQPPSELYRPSLQPYQRTTYDFFIPKDRRENLQKKLFHMQQLLPNSGLPNLDRWHSLFPLDTKATRNSTCFGYPSWMYKAQNNKNGRHFALRRIEGYRLTNEKAILNVTKEWKKIINANIVTVHEAFTTEFFGDSSLIFVYDFHPLSETLYDHHFPPNNSHNRLRNTNKIPENLLWSYVCQIANALLAIHNAKLAARCLELSKIIWENNRIRLAACSILDVLHHDSPNRKTIEELQQEDFVKFGRIILALATNTPTLNFNNIDAALATIVPRYSTQLRGVLEWLIKPSAPGETKTVETLLGGITTHLANFANFVMQESDEKEFHLMRELENGRIARLMFKLSVVNERGDSCGVHNWSETGERLLLKLFRDYVFHQVDADGKARLDTNHYLNCLSKLDASSEEQILLTSRDNATVFVVSYRSIRQMLDRAYGELGKESKPSATGATI</sequence>
<keyword id="KW-0002">3D-structure</keyword>
<keyword id="KW-0067">ATP-binding</keyword>
<keyword id="KW-0175">Coiled coil</keyword>
<keyword id="KW-0963">Cytoplasm</keyword>
<keyword id="KW-0479">Metal-binding</keyword>
<keyword id="KW-0507">mRNA processing</keyword>
<keyword id="KW-0547">Nucleotide-binding</keyword>
<keyword id="KW-1185">Reference proteome</keyword>
<keyword id="KW-0862">Zinc</keyword>
<keyword id="KW-0863">Zinc-finger</keyword>
<accession>Q7SDP4</accession>
<proteinExistence type="evidence at protein level"/>
<gene>
    <name type="primary">par-2</name>
    <name evidence="1" type="synonym">pan3</name>
    <name type="ORF">NCU01929</name>
</gene>
<protein>
    <recommendedName>
        <fullName evidence="1">PAN2-PAN3 deadenylation complex subunit pan3</fullName>
    </recommendedName>
    <alternativeName>
        <fullName evidence="1">PAB1P-dependent poly(A)-specific ribonuclease</fullName>
    </alternativeName>
    <alternativeName>
        <fullName evidence="1">Poly(A)-nuclease deadenylation complex subunit 3</fullName>
        <shortName evidence="1">PAN deadenylation complex subunit 3</shortName>
    </alternativeName>
</protein>
<reference key="1">
    <citation type="journal article" date="2003" name="Nature">
        <title>The genome sequence of the filamentous fungus Neurospora crassa.</title>
        <authorList>
            <person name="Galagan J.E."/>
            <person name="Calvo S.E."/>
            <person name="Borkovich K.A."/>
            <person name="Selker E.U."/>
            <person name="Read N.D."/>
            <person name="Jaffe D.B."/>
            <person name="FitzHugh W."/>
            <person name="Ma L.-J."/>
            <person name="Smirnov S."/>
            <person name="Purcell S."/>
            <person name="Rehman B."/>
            <person name="Elkins T."/>
            <person name="Engels R."/>
            <person name="Wang S."/>
            <person name="Nielsen C.B."/>
            <person name="Butler J."/>
            <person name="Endrizzi M."/>
            <person name="Qui D."/>
            <person name="Ianakiev P."/>
            <person name="Bell-Pedersen D."/>
            <person name="Nelson M.A."/>
            <person name="Werner-Washburne M."/>
            <person name="Selitrennikoff C.P."/>
            <person name="Kinsey J.A."/>
            <person name="Braun E.L."/>
            <person name="Zelter A."/>
            <person name="Schulte U."/>
            <person name="Kothe G.O."/>
            <person name="Jedd G."/>
            <person name="Mewes H.-W."/>
            <person name="Staben C."/>
            <person name="Marcotte E."/>
            <person name="Greenberg D."/>
            <person name="Roy A."/>
            <person name="Foley K."/>
            <person name="Naylor J."/>
            <person name="Stange-Thomann N."/>
            <person name="Barrett R."/>
            <person name="Gnerre S."/>
            <person name="Kamal M."/>
            <person name="Kamvysselis M."/>
            <person name="Mauceli E.W."/>
            <person name="Bielke C."/>
            <person name="Rudd S."/>
            <person name="Frishman D."/>
            <person name="Krystofova S."/>
            <person name="Rasmussen C."/>
            <person name="Metzenberg R.L."/>
            <person name="Perkins D.D."/>
            <person name="Kroken S."/>
            <person name="Cogoni C."/>
            <person name="Macino G."/>
            <person name="Catcheside D.E.A."/>
            <person name="Li W."/>
            <person name="Pratt R.J."/>
            <person name="Osmani S.A."/>
            <person name="DeSouza C.P.C."/>
            <person name="Glass N.L."/>
            <person name="Orbach M.J."/>
            <person name="Berglund J.A."/>
            <person name="Voelker R."/>
            <person name="Yarden O."/>
            <person name="Plamann M."/>
            <person name="Seiler S."/>
            <person name="Dunlap J.C."/>
            <person name="Radford A."/>
            <person name="Aramayo R."/>
            <person name="Natvig D.O."/>
            <person name="Alex L.A."/>
            <person name="Mannhaupt G."/>
            <person name="Ebbole D.J."/>
            <person name="Freitag M."/>
            <person name="Paulsen I."/>
            <person name="Sachs M.S."/>
            <person name="Lander E.S."/>
            <person name="Nusbaum C."/>
            <person name="Birren B.W."/>
        </authorList>
    </citation>
    <scope>NUCLEOTIDE SEQUENCE [LARGE SCALE GENOMIC DNA]</scope>
    <source>
        <strain>ATCC 24698 / 74-OR23-1A / CBS 708.71 / DSM 1257 / FGSC 987</strain>
    </source>
</reference>
<reference evidence="8 9" key="2">
    <citation type="journal article" date="2013" name="Mol. Cell">
        <title>Structure of the PAN3 pseudokinase reveals the basis for interactions with the PAN2 deadenylase and the GW182 proteins.</title>
        <authorList>
            <person name="Christie M."/>
            <person name="Boland A."/>
            <person name="Huntzinger E."/>
            <person name="Weichenrieder O."/>
            <person name="Izaurralde E."/>
        </authorList>
    </citation>
    <scope>X-RAY CRYSTALLOGRAPHY (2.85 ANGSTROMS) OF 234-656 IN COMPLEX WITH ATP</scope>
    <scope>SUBUNIT</scope>
</reference>
<reference evidence="10 11" key="3">
    <citation type="journal article" date="2014" name="Nat. Struct. Mol. Biol.">
        <title>An asymmetric PAN3 dimer recruits a single PAN2 exonuclease to mediate mRNA deadenylation and decay.</title>
        <authorList>
            <person name="Jonas S."/>
            <person name="Christie M."/>
            <person name="Peter D."/>
            <person name="Bhandari D."/>
            <person name="Loh B."/>
            <person name="Huntzinger E."/>
            <person name="Weichenrieder O."/>
            <person name="Izaurralde E."/>
        </authorList>
    </citation>
    <scope>X-RAY CRYSTALLOGRAPHY (1.85 ANGSTROMS) OF 234-656 IN COMPLEX WITH ATP</scope>
    <scope>SUBUNIT</scope>
</reference>
<name>PAN3_NEUCR</name>
<feature type="chain" id="PRO_0000295373" description="PAN2-PAN3 deadenylation complex subunit pan3">
    <location>
        <begin position="1"/>
        <end position="656"/>
    </location>
</feature>
<feature type="zinc finger region" description="C3H1-type" evidence="1">
    <location>
        <begin position="24"/>
        <end position="53"/>
    </location>
</feature>
<feature type="region of interest" description="Disordered" evidence="2">
    <location>
        <begin position="1"/>
        <end position="24"/>
    </location>
</feature>
<feature type="region of interest" description="Disordered" evidence="2">
    <location>
        <begin position="75"/>
        <end position="117"/>
    </location>
</feature>
<feature type="region of interest" description="Pseudokinase domain" evidence="1 7">
    <location>
        <begin position="251"/>
        <end position="514"/>
    </location>
</feature>
<feature type="region of interest" description="Knob domain" evidence="1 7">
    <location>
        <begin position="554"/>
        <end position="656"/>
    </location>
</feature>
<feature type="coiled-coil region" evidence="1 7">
    <location>
        <begin position="515"/>
        <end position="553"/>
    </location>
</feature>
<feature type="short sequence motif" description="PABPC-interacting motif-2 (PAM-2)" evidence="5">
    <location>
        <begin position="63"/>
        <end position="83"/>
    </location>
</feature>
<feature type="compositionally biased region" description="Polar residues" evidence="2">
    <location>
        <begin position="75"/>
        <end position="96"/>
    </location>
</feature>
<feature type="compositionally biased region" description="Polar residues" evidence="2">
    <location>
        <begin position="107"/>
        <end position="117"/>
    </location>
</feature>
<feature type="binding site" evidence="3 4">
    <location>
        <begin position="275"/>
        <end position="280"/>
    </location>
    <ligand>
        <name>ATP</name>
        <dbReference type="ChEBI" id="CHEBI:30616"/>
    </ligand>
</feature>
<feature type="binding site" evidence="1 3 4">
    <location>
        <position position="302"/>
    </location>
    <ligand>
        <name>ATP</name>
        <dbReference type="ChEBI" id="CHEBI:30616"/>
    </ligand>
</feature>
<feature type="binding site" evidence="1 3 4">
    <location>
        <begin position="352"/>
        <end position="359"/>
    </location>
    <ligand>
        <name>ATP</name>
        <dbReference type="ChEBI" id="CHEBI:30616"/>
    </ligand>
</feature>
<feature type="binding site" evidence="1 3 4">
    <location>
        <begin position="412"/>
        <end position="413"/>
    </location>
    <ligand>
        <name>ATP</name>
        <dbReference type="ChEBI" id="CHEBI:30616"/>
    </ligand>
</feature>
<feature type="helix" evidence="12">
    <location>
        <begin position="236"/>
        <end position="250"/>
    </location>
</feature>
<feature type="helix" evidence="12">
    <location>
        <begin position="254"/>
        <end position="256"/>
    </location>
</feature>
<feature type="strand" evidence="12">
    <location>
        <begin position="262"/>
        <end position="269"/>
    </location>
</feature>
<feature type="turn" evidence="12">
    <location>
        <begin position="279"/>
        <end position="281"/>
    </location>
</feature>
<feature type="strand" evidence="12">
    <location>
        <begin position="285"/>
        <end position="292"/>
    </location>
</feature>
<feature type="turn" evidence="12">
    <location>
        <begin position="293"/>
        <end position="295"/>
    </location>
</feature>
<feature type="strand" evidence="12">
    <location>
        <begin position="298"/>
        <end position="305"/>
    </location>
</feature>
<feature type="helix" evidence="12">
    <location>
        <begin position="314"/>
        <end position="318"/>
    </location>
</feature>
<feature type="helix" evidence="12">
    <location>
        <begin position="319"/>
        <end position="322"/>
    </location>
</feature>
<feature type="strand" evidence="12">
    <location>
        <begin position="333"/>
        <end position="339"/>
    </location>
</feature>
<feature type="strand" evidence="12">
    <location>
        <begin position="346"/>
        <end position="352"/>
    </location>
</feature>
<feature type="helix" evidence="12">
    <location>
        <begin position="360"/>
        <end position="364"/>
    </location>
</feature>
<feature type="helix" evidence="12">
    <location>
        <begin position="382"/>
        <end position="400"/>
    </location>
</feature>
<feature type="turn" evidence="12">
    <location>
        <begin position="401"/>
        <end position="403"/>
    </location>
</feature>
<feature type="helix" evidence="12">
    <location>
        <begin position="411"/>
        <end position="413"/>
    </location>
</feature>
<feature type="strand" evidence="12">
    <location>
        <begin position="414"/>
        <end position="417"/>
    </location>
</feature>
<feature type="strand" evidence="12">
    <location>
        <begin position="420"/>
        <end position="423"/>
    </location>
</feature>
<feature type="helix" evidence="12">
    <location>
        <begin position="429"/>
        <end position="432"/>
    </location>
</feature>
<feature type="turn" evidence="12">
    <location>
        <begin position="433"/>
        <end position="435"/>
    </location>
</feature>
<feature type="helix" evidence="12">
    <location>
        <begin position="442"/>
        <end position="461"/>
    </location>
</feature>
<feature type="helix" evidence="12">
    <location>
        <begin position="469"/>
        <end position="471"/>
    </location>
</feature>
<feature type="turn" evidence="12">
    <location>
        <begin position="472"/>
        <end position="477"/>
    </location>
</feature>
<feature type="turn" evidence="12">
    <location>
        <begin position="480"/>
        <end position="482"/>
    </location>
</feature>
<feature type="helix" evidence="12">
    <location>
        <begin position="485"/>
        <end position="495"/>
    </location>
</feature>
<feature type="strand" evidence="12">
    <location>
        <begin position="500"/>
        <end position="502"/>
    </location>
</feature>
<feature type="helix" evidence="12">
    <location>
        <begin position="506"/>
        <end position="513"/>
    </location>
</feature>
<feature type="helix" evidence="13">
    <location>
        <begin position="540"/>
        <end position="554"/>
    </location>
</feature>
<feature type="helix" evidence="13">
    <location>
        <begin position="566"/>
        <end position="583"/>
    </location>
</feature>
<feature type="strand" evidence="12">
    <location>
        <begin position="588"/>
        <end position="590"/>
    </location>
</feature>
<feature type="helix" evidence="13">
    <location>
        <begin position="596"/>
        <end position="607"/>
    </location>
</feature>
<feature type="strand" evidence="13">
    <location>
        <begin position="613"/>
        <end position="617"/>
    </location>
</feature>
<feature type="strand" evidence="14">
    <location>
        <begin position="619"/>
        <end position="621"/>
    </location>
</feature>
<feature type="strand" evidence="13">
    <location>
        <begin position="624"/>
        <end position="628"/>
    </location>
</feature>
<feature type="helix" evidence="13">
    <location>
        <begin position="629"/>
        <end position="643"/>
    </location>
</feature>
<organism>
    <name type="scientific">Neurospora crassa (strain ATCC 24698 / 74-OR23-1A / CBS 708.71 / DSM 1257 / FGSC 987)</name>
    <dbReference type="NCBI Taxonomy" id="367110"/>
    <lineage>
        <taxon>Eukaryota</taxon>
        <taxon>Fungi</taxon>
        <taxon>Dikarya</taxon>
        <taxon>Ascomycota</taxon>
        <taxon>Pezizomycotina</taxon>
        <taxon>Sordariomycetes</taxon>
        <taxon>Sordariomycetidae</taxon>
        <taxon>Sordariales</taxon>
        <taxon>Sordariaceae</taxon>
        <taxon>Neurospora</taxon>
    </lineage>
</organism>
<evidence type="ECO:0000255" key="1">
    <source>
        <dbReference type="HAMAP-Rule" id="MF_03181"/>
    </source>
</evidence>
<evidence type="ECO:0000256" key="2">
    <source>
        <dbReference type="SAM" id="MobiDB-lite"/>
    </source>
</evidence>
<evidence type="ECO:0000269" key="3">
    <source>
    </source>
</evidence>
<evidence type="ECO:0000269" key="4">
    <source>
    </source>
</evidence>
<evidence type="ECO:0000305" key="5"/>
<evidence type="ECO:0000305" key="6">
    <source>
    </source>
</evidence>
<evidence type="ECO:0000305" key="7">
    <source>
    </source>
</evidence>
<evidence type="ECO:0007744" key="8">
    <source>
        <dbReference type="PDB" id="4BWK"/>
    </source>
</evidence>
<evidence type="ECO:0007744" key="9">
    <source>
        <dbReference type="PDB" id="4BWX"/>
    </source>
</evidence>
<evidence type="ECO:0007744" key="10">
    <source>
        <dbReference type="PDB" id="4CZX"/>
    </source>
</evidence>
<evidence type="ECO:0007744" key="11">
    <source>
        <dbReference type="PDB" id="4CZY"/>
    </source>
</evidence>
<evidence type="ECO:0007829" key="12">
    <source>
        <dbReference type="PDB" id="4BWX"/>
    </source>
</evidence>
<evidence type="ECO:0007829" key="13">
    <source>
        <dbReference type="PDB" id="4CZX"/>
    </source>
</evidence>
<evidence type="ECO:0007829" key="14">
    <source>
        <dbReference type="PDB" id="4CZY"/>
    </source>
</evidence>
<dbReference type="EMBL" id="CM002236">
    <property type="protein sequence ID" value="EAA34877.3"/>
    <property type="molecule type" value="Genomic_DNA"/>
</dbReference>
<dbReference type="RefSeq" id="XP_964113.3">
    <property type="nucleotide sequence ID" value="XM_959020.3"/>
</dbReference>
<dbReference type="PDB" id="4BWK">
    <property type="method" value="X-ray"/>
    <property type="resolution" value="3.30 A"/>
    <property type="chains" value="A/B=234-656"/>
</dbReference>
<dbReference type="PDB" id="4BWX">
    <property type="method" value="X-ray"/>
    <property type="resolution" value="2.85 A"/>
    <property type="chains" value="A/B=234-656"/>
</dbReference>
<dbReference type="PDB" id="4CZX">
    <property type="method" value="X-ray"/>
    <property type="resolution" value="1.85 A"/>
    <property type="chains" value="B=538-656"/>
</dbReference>
<dbReference type="PDB" id="4CZY">
    <property type="method" value="X-ray"/>
    <property type="resolution" value="3.40 A"/>
    <property type="chains" value="B/D=234-656"/>
</dbReference>
<dbReference type="PDBsum" id="4BWK"/>
<dbReference type="PDBsum" id="4BWX"/>
<dbReference type="PDBsum" id="4CZX"/>
<dbReference type="PDBsum" id="4CZY"/>
<dbReference type="SMR" id="Q7SDP4"/>
<dbReference type="DIP" id="DIP-61540N"/>
<dbReference type="FunCoup" id="Q7SDP4">
    <property type="interactions" value="610"/>
</dbReference>
<dbReference type="IntAct" id="Q7SDP4">
    <property type="interactions" value="1"/>
</dbReference>
<dbReference type="STRING" id="367110.Q7SDP4"/>
<dbReference type="EnsemblFungi" id="EAA34877">
    <property type="protein sequence ID" value="EAA34877"/>
    <property type="gene ID" value="NCU01929"/>
</dbReference>
<dbReference type="GeneID" id="3880262"/>
<dbReference type="KEGG" id="ncr:NCU01929"/>
<dbReference type="VEuPathDB" id="FungiDB:NCU01929"/>
<dbReference type="HOGENOM" id="CLU_016423_0_1_1"/>
<dbReference type="InParanoid" id="Q7SDP4"/>
<dbReference type="OrthoDB" id="204958at2759"/>
<dbReference type="EvolutionaryTrace" id="Q7SDP4"/>
<dbReference type="Proteomes" id="UP000001805">
    <property type="component" value="Chromosome 1, Linkage Group I"/>
</dbReference>
<dbReference type="GO" id="GO:0000932">
    <property type="term" value="C:P-body"/>
    <property type="evidence" value="ECO:0000318"/>
    <property type="project" value="GO_Central"/>
</dbReference>
<dbReference type="GO" id="GO:0031251">
    <property type="term" value="C:PAN complex"/>
    <property type="evidence" value="ECO:0000318"/>
    <property type="project" value="GO_Central"/>
</dbReference>
<dbReference type="GO" id="GO:0005524">
    <property type="term" value="F:ATP binding"/>
    <property type="evidence" value="ECO:0007669"/>
    <property type="project" value="UniProtKB-UniRule"/>
</dbReference>
<dbReference type="GO" id="GO:0008143">
    <property type="term" value="F:poly(A) binding"/>
    <property type="evidence" value="ECO:0000318"/>
    <property type="project" value="GO_Central"/>
</dbReference>
<dbReference type="GO" id="GO:0008270">
    <property type="term" value="F:zinc ion binding"/>
    <property type="evidence" value="ECO:0007669"/>
    <property type="project" value="UniProtKB-KW"/>
</dbReference>
<dbReference type="GO" id="GO:0006397">
    <property type="term" value="P:mRNA processing"/>
    <property type="evidence" value="ECO:0007669"/>
    <property type="project" value="UniProtKB-KW"/>
</dbReference>
<dbReference type="GO" id="GO:0000289">
    <property type="term" value="P:nuclear-transcribed mRNA poly(A) tail shortening"/>
    <property type="evidence" value="ECO:0000318"/>
    <property type="project" value="GO_Central"/>
</dbReference>
<dbReference type="FunFam" id="1.10.510.10:FF:000520">
    <property type="entry name" value="PAN2-PAN3 deadenylation complex subunit PAN3"/>
    <property type="match status" value="1"/>
</dbReference>
<dbReference type="Gene3D" id="1.10.287.3700">
    <property type="match status" value="1"/>
</dbReference>
<dbReference type="Gene3D" id="1.20.5.5160">
    <property type="match status" value="1"/>
</dbReference>
<dbReference type="Gene3D" id="6.10.250.3160">
    <property type="match status" value="1"/>
</dbReference>
<dbReference type="Gene3D" id="1.10.510.10">
    <property type="entry name" value="Transferase(Phosphotransferase) domain 1"/>
    <property type="match status" value="1"/>
</dbReference>
<dbReference type="HAMAP" id="MF_03181">
    <property type="entry name" value="PAN3"/>
    <property type="match status" value="1"/>
</dbReference>
<dbReference type="InterPro" id="IPR011009">
    <property type="entry name" value="Kinase-like_dom_sf"/>
</dbReference>
<dbReference type="InterPro" id="IPR030844">
    <property type="entry name" value="PAN3"/>
</dbReference>
<dbReference type="InterPro" id="IPR041332">
    <property type="entry name" value="Pan3_PK"/>
</dbReference>
<dbReference type="InterPro" id="IPR000571">
    <property type="entry name" value="Znf_CCCH"/>
</dbReference>
<dbReference type="PANTHER" id="PTHR12272">
    <property type="entry name" value="DEADENYLATION COMPLEX SUBUNIT PAN3"/>
    <property type="match status" value="1"/>
</dbReference>
<dbReference type="PANTHER" id="PTHR12272:SF11">
    <property type="entry name" value="PAN2-PAN3 DEADENYLATION COMPLEX SUBUNIT PAN3"/>
    <property type="match status" value="1"/>
</dbReference>
<dbReference type="Pfam" id="PF18101">
    <property type="entry name" value="Pan3_PK"/>
    <property type="match status" value="1"/>
</dbReference>
<dbReference type="SUPFAM" id="SSF56112">
    <property type="entry name" value="Protein kinase-like (PK-like)"/>
    <property type="match status" value="1"/>
</dbReference>
<dbReference type="PROSITE" id="PS50103">
    <property type="entry name" value="ZF_C3H1"/>
    <property type="match status" value="1"/>
</dbReference>